<keyword id="KW-0963">Cytoplasm</keyword>
<keyword id="KW-0290">Folate-binding</keyword>
<keyword id="KW-0819">tRNA processing</keyword>
<protein>
    <recommendedName>
        <fullName evidence="1">tRNA-modifying protein YgfZ</fullName>
    </recommendedName>
</protein>
<feature type="chain" id="PRO_1000138089" description="tRNA-modifying protein YgfZ">
    <location>
        <begin position="1"/>
        <end position="330"/>
    </location>
</feature>
<feature type="binding site" evidence="1">
    <location>
        <position position="28"/>
    </location>
    <ligand>
        <name>folate</name>
        <dbReference type="ChEBI" id="CHEBI:62501"/>
    </ligand>
</feature>
<feature type="binding site" evidence="1">
    <location>
        <position position="190"/>
    </location>
    <ligand>
        <name>folate</name>
        <dbReference type="ChEBI" id="CHEBI:62501"/>
    </ligand>
</feature>
<organism>
    <name type="scientific">Yersinia pseudotuberculosis serotype IB (strain PB1/+)</name>
    <dbReference type="NCBI Taxonomy" id="502801"/>
    <lineage>
        <taxon>Bacteria</taxon>
        <taxon>Pseudomonadati</taxon>
        <taxon>Pseudomonadota</taxon>
        <taxon>Gammaproteobacteria</taxon>
        <taxon>Enterobacterales</taxon>
        <taxon>Yersiniaceae</taxon>
        <taxon>Yersinia</taxon>
    </lineage>
</organism>
<comment type="function">
    <text evidence="1">Folate-binding protein involved in regulating the level of ATP-DnaA and in the modification of some tRNAs. It is probably a key factor in regulatory networks that act via tRNA modification, such as initiation of chromosomal replication.</text>
</comment>
<comment type="subcellular location">
    <subcellularLocation>
        <location evidence="1">Cytoplasm</location>
    </subcellularLocation>
</comment>
<comment type="similarity">
    <text evidence="1">Belongs to the tRNA-modifying YgfZ family.</text>
</comment>
<name>YGFZ_YERPB</name>
<accession>B2K0P7</accession>
<sequence length="330" mass="35996">MAYHTPFAAQPPVASSGLPLTLISLDDWALVTLTGADRVKYLQGQVTADIDALSADQHVLCAHCDAKGKMWSNLRLFYRGEGLAFIERRSLLDNQLSELKKYAVFSKVVIEPQPDAVLIGVAGSQAKTALAEIFTELPSTEHPVTQMGNSTLLHFSLPAERFLLVTDTEQAQQLVEKLAGRAQFNDSKQWLALDIEAGFPIIDAANSAQFIPQATNIQALNGISFTKGCYTGQEMVARAKYRGANKRALYWLAGNASRVPAAGEDLEWQLGENWRRTGTVLSAIQLNDGTVWVQAVLNNDLAADSVLRVRDDALGTLAIQPLPYSLAEDK</sequence>
<reference key="1">
    <citation type="submission" date="2008-04" db="EMBL/GenBank/DDBJ databases">
        <title>Complete sequence of Yersinia pseudotuberculosis PB1/+.</title>
        <authorList>
            <person name="Copeland A."/>
            <person name="Lucas S."/>
            <person name="Lapidus A."/>
            <person name="Glavina del Rio T."/>
            <person name="Dalin E."/>
            <person name="Tice H."/>
            <person name="Bruce D."/>
            <person name="Goodwin L."/>
            <person name="Pitluck S."/>
            <person name="Munk A.C."/>
            <person name="Brettin T."/>
            <person name="Detter J.C."/>
            <person name="Han C."/>
            <person name="Tapia R."/>
            <person name="Schmutz J."/>
            <person name="Larimer F."/>
            <person name="Land M."/>
            <person name="Hauser L."/>
            <person name="Challacombe J.F."/>
            <person name="Green L."/>
            <person name="Lindler L.E."/>
            <person name="Nikolich M.P."/>
            <person name="Richardson P."/>
        </authorList>
    </citation>
    <scope>NUCLEOTIDE SEQUENCE [LARGE SCALE GENOMIC DNA]</scope>
    <source>
        <strain>PB1/+</strain>
    </source>
</reference>
<proteinExistence type="inferred from homology"/>
<evidence type="ECO:0000255" key="1">
    <source>
        <dbReference type="HAMAP-Rule" id="MF_01175"/>
    </source>
</evidence>
<gene>
    <name type="ordered locus">YPTS_3305</name>
</gene>
<dbReference type="EMBL" id="CP001048">
    <property type="protein sequence ID" value="ACC90260.1"/>
    <property type="molecule type" value="Genomic_DNA"/>
</dbReference>
<dbReference type="RefSeq" id="WP_012413924.1">
    <property type="nucleotide sequence ID" value="NZ_CP009780.1"/>
</dbReference>
<dbReference type="SMR" id="B2K0P7"/>
<dbReference type="KEGG" id="ypb:YPTS_3305"/>
<dbReference type="PATRIC" id="fig|502801.10.peg.2745"/>
<dbReference type="GO" id="GO:0005737">
    <property type="term" value="C:cytoplasm"/>
    <property type="evidence" value="ECO:0007669"/>
    <property type="project" value="UniProtKB-SubCell"/>
</dbReference>
<dbReference type="GO" id="GO:0005542">
    <property type="term" value="F:folic acid binding"/>
    <property type="evidence" value="ECO:0007669"/>
    <property type="project" value="UniProtKB-UniRule"/>
</dbReference>
<dbReference type="GO" id="GO:0016226">
    <property type="term" value="P:iron-sulfur cluster assembly"/>
    <property type="evidence" value="ECO:0007669"/>
    <property type="project" value="TreeGrafter"/>
</dbReference>
<dbReference type="GO" id="GO:0009451">
    <property type="term" value="P:RNA modification"/>
    <property type="evidence" value="ECO:0007669"/>
    <property type="project" value="InterPro"/>
</dbReference>
<dbReference type="GO" id="GO:0008033">
    <property type="term" value="P:tRNA processing"/>
    <property type="evidence" value="ECO:0007669"/>
    <property type="project" value="UniProtKB-UniRule"/>
</dbReference>
<dbReference type="FunFam" id="2.40.30.160:FF:000001">
    <property type="entry name" value="tRNA-modifying protein YgfZ"/>
    <property type="match status" value="1"/>
</dbReference>
<dbReference type="FunFam" id="3.30.70.1400:FF:000002">
    <property type="entry name" value="tRNA-modifying protein YgfZ"/>
    <property type="match status" value="1"/>
</dbReference>
<dbReference type="FunFam" id="3.30.70.1630:FF:000001">
    <property type="entry name" value="tRNA-modifying protein YgfZ"/>
    <property type="match status" value="1"/>
</dbReference>
<dbReference type="Gene3D" id="2.40.30.160">
    <property type="match status" value="1"/>
</dbReference>
<dbReference type="Gene3D" id="3.30.70.1630">
    <property type="match status" value="1"/>
</dbReference>
<dbReference type="Gene3D" id="3.30.70.1400">
    <property type="entry name" value="Aminomethyltransferase beta-barrel domains"/>
    <property type="match status" value="1"/>
</dbReference>
<dbReference type="HAMAP" id="MF_01175">
    <property type="entry name" value="tRNA_modifying_YgfZ"/>
    <property type="match status" value="1"/>
</dbReference>
<dbReference type="InterPro" id="IPR029043">
    <property type="entry name" value="GcvT/YgfZ_C"/>
</dbReference>
<dbReference type="InterPro" id="IPR023758">
    <property type="entry name" value="tRNA-modifying_YgfZ"/>
</dbReference>
<dbReference type="InterPro" id="IPR045179">
    <property type="entry name" value="YgfZ/GcvT"/>
</dbReference>
<dbReference type="InterPro" id="IPR017703">
    <property type="entry name" value="YgfZ/GcvT_CS"/>
</dbReference>
<dbReference type="InterPro" id="IPR048451">
    <property type="entry name" value="YgfZ_barrel"/>
</dbReference>
<dbReference type="NCBIfam" id="NF007110">
    <property type="entry name" value="PRK09559.1"/>
    <property type="match status" value="1"/>
</dbReference>
<dbReference type="NCBIfam" id="TIGR03317">
    <property type="entry name" value="ygfZ_signature"/>
    <property type="match status" value="1"/>
</dbReference>
<dbReference type="PANTHER" id="PTHR22602">
    <property type="entry name" value="TRANSFERASE CAF17, MITOCHONDRIAL-RELATED"/>
    <property type="match status" value="1"/>
</dbReference>
<dbReference type="PANTHER" id="PTHR22602:SF0">
    <property type="entry name" value="TRANSFERASE CAF17, MITOCHONDRIAL-RELATED"/>
    <property type="match status" value="1"/>
</dbReference>
<dbReference type="Pfam" id="PF21130">
    <property type="entry name" value="YgfZ_barrel"/>
    <property type="match status" value="1"/>
</dbReference>
<dbReference type="SUPFAM" id="SSF101790">
    <property type="entry name" value="Aminomethyltransferase beta-barrel domain"/>
    <property type="match status" value="1"/>
</dbReference>
<dbReference type="SUPFAM" id="SSF103025">
    <property type="entry name" value="Folate-binding domain"/>
    <property type="match status" value="1"/>
</dbReference>